<evidence type="ECO:0000255" key="1">
    <source>
        <dbReference type="HAMAP-Rule" id="MF_01902"/>
    </source>
</evidence>
<evidence type="ECO:0000305" key="2"/>
<name>DNAE2_CORGL</name>
<reference key="1">
    <citation type="journal article" date="2003" name="Appl. Microbiol. Biotechnol.">
        <title>The Corynebacterium glutamicum genome: features and impacts on biotechnological processes.</title>
        <authorList>
            <person name="Ikeda M."/>
            <person name="Nakagawa S."/>
        </authorList>
    </citation>
    <scope>NUCLEOTIDE SEQUENCE [LARGE SCALE GENOMIC DNA]</scope>
    <source>
        <strain>ATCC 13032 / DSM 20300 / JCM 1318 / BCRC 11384 / CCUG 27702 / LMG 3730 / NBRC 12168 / NCIMB 10025 / NRRL B-2784 / 534</strain>
    </source>
</reference>
<reference key="2">
    <citation type="journal article" date="2003" name="J. Biotechnol.">
        <title>The complete Corynebacterium glutamicum ATCC 13032 genome sequence and its impact on the production of L-aspartate-derived amino acids and vitamins.</title>
        <authorList>
            <person name="Kalinowski J."/>
            <person name="Bathe B."/>
            <person name="Bartels D."/>
            <person name="Bischoff N."/>
            <person name="Bott M."/>
            <person name="Burkovski A."/>
            <person name="Dusch N."/>
            <person name="Eggeling L."/>
            <person name="Eikmanns B.J."/>
            <person name="Gaigalat L."/>
            <person name="Goesmann A."/>
            <person name="Hartmann M."/>
            <person name="Huthmacher K."/>
            <person name="Kraemer R."/>
            <person name="Linke B."/>
            <person name="McHardy A.C."/>
            <person name="Meyer F."/>
            <person name="Moeckel B."/>
            <person name="Pfefferle W."/>
            <person name="Puehler A."/>
            <person name="Rey D.A."/>
            <person name="Rueckert C."/>
            <person name="Rupp O."/>
            <person name="Sahm H."/>
            <person name="Wendisch V.F."/>
            <person name="Wiegraebe I."/>
            <person name="Tauch A."/>
        </authorList>
    </citation>
    <scope>NUCLEOTIDE SEQUENCE [LARGE SCALE GENOMIC DNA]</scope>
    <source>
        <strain>ATCC 13032 / DSM 20300 / JCM 1318 / BCRC 11384 / CCUG 27702 / LMG 3730 / NBRC 12168 / NCIMB 10025 / NRRL B-2784 / 534</strain>
    </source>
</reference>
<sequence length="1055" mass="115099">MYPIIMEWNGGGSFNGRPLSWSKLERILSGKKVESLRPVLHEPDAQAPSSAMQGEASVPFAELHATSSYNFLTGASDPSDVVVQAKKLGLVALSVMDRDGFYGAVRFAEAAAEAGMHTVYGAELSLQEGVLTVLCKNPEGYKKLSHLISDAKMATGEKGEVRYPPLPMVAEHAAGDWVVLAGFQWLDKIDYVIDCFKPENIVLEFGSTMTPEDADRNEYLRRTQAKFQLRGILSTNPESAARGSVRLAGAKQALARKMPLADAESELHPMGTTWMRSGDTLLKAHPDYADLIATTVELAAECAFTLDLVAPNLPKWDTPGEHTEMSWLAHLVSTRIDTRYVGRSADIKARAATQIDYELGVIEKLGFPGYFLVVNDLVEFCRDSNILCQGRGSAANSAVCFVLGITNAEPISAGLLFERFLSPDRDGPPDIDIDIESGRREEVIQYVYEKYGRDNAAQVANVITYRTKGAMRDAARALGYPQGAADAWAKGTSEPPDDVLELAAQFKGQPRHLGIHSGGMVICDRPIADVVPVEWARMDNRSVVQWDKDDCATAGLVKFDLLGLGMLEAIHHMLDLVAEHRGKKINLWELDLAEPEVYDMLCKADAVGVFQVESRAQLSTLPRLKPRTFFDLVVEVALIRPGPIQGGSVHPYLRRRAGEEAITYDHPVLEKSLGKTLGIPLFQEQLMQVAVDAAGFSGGEADSLRRAMGSKRSPERMAALRSRFFQGLKDTNGIVGETAEKLWNKIVAFAAYGFPESHSQSFASLVYFSAWFKYHYPAEFCVGLLRAQPMGFYSPQSLISDARRHGVSILPITVNDSGVEADAPNGAIRLGLNLVKGLGHDAAQRIEDNAPFDSIPDLSRRADLNVAQVEALARAGAVDCLGVGRRQALWQAGVAATEKPGMLPGLSVIEAPALPGMSAFELMATNISATGVTADYQPMALIRERMEELGIVPADRLLEVEDGTRLRIAGIVTHRQRPQTASGLTFLGMEDETGLMNVMVSVGLWQRQRVLARNAKALIIRGIVQNAQGVATVVADRLEPLDMGEFLSRGSRDFR</sequence>
<gene>
    <name evidence="1" type="primary">dnaE2</name>
    <name type="ordered locus">Cgl0638</name>
    <name type="ordered locus">cg0738</name>
</gene>
<comment type="function">
    <text evidence="1">DNA polymerase involved in damage-induced mutagenesis and translesion synthesis (TLS). It is not the major replicative DNA polymerase.</text>
</comment>
<comment type="catalytic activity">
    <reaction evidence="1">
        <text>DNA(n) + a 2'-deoxyribonucleoside 5'-triphosphate = DNA(n+1) + diphosphate</text>
        <dbReference type="Rhea" id="RHEA:22508"/>
        <dbReference type="Rhea" id="RHEA-COMP:17339"/>
        <dbReference type="Rhea" id="RHEA-COMP:17340"/>
        <dbReference type="ChEBI" id="CHEBI:33019"/>
        <dbReference type="ChEBI" id="CHEBI:61560"/>
        <dbReference type="ChEBI" id="CHEBI:173112"/>
        <dbReference type="EC" id="2.7.7.7"/>
    </reaction>
</comment>
<comment type="subcellular location">
    <subcellularLocation>
        <location evidence="1">Cytoplasm</location>
    </subcellularLocation>
</comment>
<comment type="similarity">
    <text evidence="1">Belongs to the DNA polymerase type-C family. DnaE2 subfamily.</text>
</comment>
<comment type="sequence caution" evidence="2">
    <conflict type="erroneous initiation">
        <sequence resource="EMBL-CDS" id="BAB98031"/>
    </conflict>
</comment>
<proteinExistence type="inferred from homology"/>
<protein>
    <recommendedName>
        <fullName evidence="1">Error-prone DNA polymerase</fullName>
        <ecNumber evidence="1">2.7.7.7</ecNumber>
    </recommendedName>
</protein>
<feature type="chain" id="PRO_0000103378" description="Error-prone DNA polymerase">
    <location>
        <begin position="1"/>
        <end position="1055"/>
    </location>
</feature>
<accession>Q6M7C6</accession>
<accession>Q8NSN0</accession>
<dbReference type="EC" id="2.7.7.7" evidence="1"/>
<dbReference type="EMBL" id="BA000036">
    <property type="protein sequence ID" value="BAB98031.1"/>
    <property type="status" value="ALT_INIT"/>
    <property type="molecule type" value="Genomic_DNA"/>
</dbReference>
<dbReference type="EMBL" id="BX927149">
    <property type="protein sequence ID" value="CAF19345.1"/>
    <property type="molecule type" value="Genomic_DNA"/>
</dbReference>
<dbReference type="RefSeq" id="NP_599872.1">
    <property type="nucleotide sequence ID" value="NC_003450.3"/>
</dbReference>
<dbReference type="RefSeq" id="WP_011013785.1">
    <property type="nucleotide sequence ID" value="NC_006958.1"/>
</dbReference>
<dbReference type="SMR" id="Q6M7C6"/>
<dbReference type="STRING" id="196627.cg0738"/>
<dbReference type="KEGG" id="cgb:cg0738"/>
<dbReference type="KEGG" id="cgl:Cgl0638"/>
<dbReference type="PATRIC" id="fig|196627.13.peg.624"/>
<dbReference type="eggNOG" id="COG0587">
    <property type="taxonomic scope" value="Bacteria"/>
</dbReference>
<dbReference type="HOGENOM" id="CLU_001600_4_0_11"/>
<dbReference type="OrthoDB" id="9803237at2"/>
<dbReference type="BioCyc" id="CORYNE:G18NG-10200-MONOMER"/>
<dbReference type="Proteomes" id="UP000000582">
    <property type="component" value="Chromosome"/>
</dbReference>
<dbReference type="Proteomes" id="UP000001009">
    <property type="component" value="Chromosome"/>
</dbReference>
<dbReference type="GO" id="GO:0005737">
    <property type="term" value="C:cytoplasm"/>
    <property type="evidence" value="ECO:0007669"/>
    <property type="project" value="UniProtKB-SubCell"/>
</dbReference>
<dbReference type="GO" id="GO:0008408">
    <property type="term" value="F:3'-5' exonuclease activity"/>
    <property type="evidence" value="ECO:0007669"/>
    <property type="project" value="InterPro"/>
</dbReference>
<dbReference type="GO" id="GO:0003887">
    <property type="term" value="F:DNA-directed DNA polymerase activity"/>
    <property type="evidence" value="ECO:0007669"/>
    <property type="project" value="UniProtKB-UniRule"/>
</dbReference>
<dbReference type="GO" id="GO:0003676">
    <property type="term" value="F:nucleic acid binding"/>
    <property type="evidence" value="ECO:0007669"/>
    <property type="project" value="InterPro"/>
</dbReference>
<dbReference type="GO" id="GO:0006281">
    <property type="term" value="P:DNA repair"/>
    <property type="evidence" value="ECO:0007669"/>
    <property type="project" value="UniProtKB-UniRule"/>
</dbReference>
<dbReference type="GO" id="GO:0006260">
    <property type="term" value="P:DNA replication"/>
    <property type="evidence" value="ECO:0007669"/>
    <property type="project" value="UniProtKB-KW"/>
</dbReference>
<dbReference type="GO" id="GO:0009432">
    <property type="term" value="P:SOS response"/>
    <property type="evidence" value="ECO:0000269"/>
    <property type="project" value="CollecTF"/>
</dbReference>
<dbReference type="CDD" id="cd04485">
    <property type="entry name" value="DnaE_OBF"/>
    <property type="match status" value="1"/>
</dbReference>
<dbReference type="CDD" id="cd07431">
    <property type="entry name" value="PHP_PolIIIA"/>
    <property type="match status" value="1"/>
</dbReference>
<dbReference type="Gene3D" id="1.10.150.870">
    <property type="match status" value="1"/>
</dbReference>
<dbReference type="Gene3D" id="3.20.20.140">
    <property type="entry name" value="Metal-dependent hydrolases"/>
    <property type="match status" value="1"/>
</dbReference>
<dbReference type="HAMAP" id="MF_01902">
    <property type="entry name" value="DNApol_error_prone"/>
    <property type="match status" value="1"/>
</dbReference>
<dbReference type="InterPro" id="IPR011708">
    <property type="entry name" value="DNA_pol3_alpha_NTPase_dom"/>
</dbReference>
<dbReference type="InterPro" id="IPR040982">
    <property type="entry name" value="DNA_pol3_finger"/>
</dbReference>
<dbReference type="InterPro" id="IPR023073">
    <property type="entry name" value="DnaE2"/>
</dbReference>
<dbReference type="InterPro" id="IPR004805">
    <property type="entry name" value="DnaE2/DnaE/PolC"/>
</dbReference>
<dbReference type="InterPro" id="IPR029460">
    <property type="entry name" value="DNAPol_HHH"/>
</dbReference>
<dbReference type="InterPro" id="IPR004365">
    <property type="entry name" value="NA-bd_OB_tRNA"/>
</dbReference>
<dbReference type="InterPro" id="IPR004013">
    <property type="entry name" value="PHP_dom"/>
</dbReference>
<dbReference type="InterPro" id="IPR003141">
    <property type="entry name" value="Pol/His_phosphatase_N"/>
</dbReference>
<dbReference type="InterPro" id="IPR016195">
    <property type="entry name" value="Pol/histidinol_Pase-like"/>
</dbReference>
<dbReference type="NCBIfam" id="NF004225">
    <property type="entry name" value="PRK05672.1"/>
    <property type="match status" value="1"/>
</dbReference>
<dbReference type="PANTHER" id="PTHR32294">
    <property type="entry name" value="DNA POLYMERASE III SUBUNIT ALPHA"/>
    <property type="match status" value="1"/>
</dbReference>
<dbReference type="PANTHER" id="PTHR32294:SF4">
    <property type="entry name" value="ERROR-PRONE DNA POLYMERASE"/>
    <property type="match status" value="1"/>
</dbReference>
<dbReference type="Pfam" id="PF07733">
    <property type="entry name" value="DNA_pol3_alpha"/>
    <property type="match status" value="2"/>
</dbReference>
<dbReference type="Pfam" id="PF17657">
    <property type="entry name" value="DNA_pol3_finger"/>
    <property type="match status" value="1"/>
</dbReference>
<dbReference type="Pfam" id="PF14579">
    <property type="entry name" value="HHH_6"/>
    <property type="match status" value="1"/>
</dbReference>
<dbReference type="Pfam" id="PF02811">
    <property type="entry name" value="PHP"/>
    <property type="match status" value="1"/>
</dbReference>
<dbReference type="Pfam" id="PF01336">
    <property type="entry name" value="tRNA_anti-codon"/>
    <property type="match status" value="1"/>
</dbReference>
<dbReference type="SMART" id="SM00481">
    <property type="entry name" value="POLIIIAc"/>
    <property type="match status" value="1"/>
</dbReference>
<dbReference type="SUPFAM" id="SSF89550">
    <property type="entry name" value="PHP domain-like"/>
    <property type="match status" value="1"/>
</dbReference>
<organism>
    <name type="scientific">Corynebacterium glutamicum (strain ATCC 13032 / DSM 20300 / JCM 1318 / BCRC 11384 / CCUG 27702 / LMG 3730 / NBRC 12168 / NCIMB 10025 / NRRL B-2784 / 534)</name>
    <dbReference type="NCBI Taxonomy" id="196627"/>
    <lineage>
        <taxon>Bacteria</taxon>
        <taxon>Bacillati</taxon>
        <taxon>Actinomycetota</taxon>
        <taxon>Actinomycetes</taxon>
        <taxon>Mycobacteriales</taxon>
        <taxon>Corynebacteriaceae</taxon>
        <taxon>Corynebacterium</taxon>
    </lineage>
</organism>
<keyword id="KW-0963">Cytoplasm</keyword>
<keyword id="KW-0227">DNA damage</keyword>
<keyword id="KW-0234">DNA repair</keyword>
<keyword id="KW-0235">DNA replication</keyword>
<keyword id="KW-0239">DNA-directed DNA polymerase</keyword>
<keyword id="KW-0548">Nucleotidyltransferase</keyword>
<keyword id="KW-1185">Reference proteome</keyword>
<keyword id="KW-0808">Transferase</keyword>